<feature type="chain" id="PRO_0000348554" description="Glycosyl hydrolase family 109 protein 2">
    <location>
        <begin position="1"/>
        <end position="413"/>
    </location>
</feature>
<feature type="binding site" evidence="1">
    <location>
        <begin position="26"/>
        <end position="27"/>
    </location>
    <ligand>
        <name>NAD(+)</name>
        <dbReference type="ChEBI" id="CHEBI:57540"/>
    </ligand>
</feature>
<feature type="binding site" evidence="1">
    <location>
        <position position="48"/>
    </location>
    <ligand>
        <name>NAD(+)</name>
        <dbReference type="ChEBI" id="CHEBI:57540"/>
    </ligand>
</feature>
<feature type="binding site" evidence="1">
    <location>
        <begin position="96"/>
        <end position="99"/>
    </location>
    <ligand>
        <name>NAD(+)</name>
        <dbReference type="ChEBI" id="CHEBI:57540"/>
    </ligand>
</feature>
<feature type="binding site" evidence="1">
    <location>
        <begin position="116"/>
        <end position="117"/>
    </location>
    <ligand>
        <name>NAD(+)</name>
        <dbReference type="ChEBI" id="CHEBI:57540"/>
    </ligand>
</feature>
<feature type="binding site" evidence="1">
    <location>
        <position position="145"/>
    </location>
    <ligand>
        <name>NAD(+)</name>
        <dbReference type="ChEBI" id="CHEBI:57540"/>
    </ligand>
</feature>
<feature type="binding site" evidence="1">
    <location>
        <position position="174"/>
    </location>
    <ligand>
        <name>substrate</name>
    </ligand>
</feature>
<feature type="binding site" evidence="1">
    <location>
        <begin position="191"/>
        <end position="195"/>
    </location>
    <ligand>
        <name>NAD(+)</name>
        <dbReference type="ChEBI" id="CHEBI:57540"/>
    </ligand>
</feature>
<feature type="binding site" evidence="1">
    <location>
        <begin position="208"/>
        <end position="211"/>
    </location>
    <ligand>
        <name>substrate</name>
    </ligand>
</feature>
<feature type="binding site" evidence="1">
    <location>
        <position position="208"/>
    </location>
    <ligand>
        <name>NAD(+)</name>
        <dbReference type="ChEBI" id="CHEBI:57540"/>
    </ligand>
</feature>
<feature type="binding site" evidence="1">
    <location>
        <position position="290"/>
    </location>
    <ligand>
        <name>substrate</name>
    </ligand>
</feature>
<organism>
    <name type="scientific">Phocaeicola vulgatus (strain ATCC 8482 / DSM 1447 / JCM 5826 / CCUG 4940 / NBRC 14291 / NCTC 11154)</name>
    <name type="common">Bacteroides vulgatus</name>
    <dbReference type="NCBI Taxonomy" id="435590"/>
    <lineage>
        <taxon>Bacteria</taxon>
        <taxon>Pseudomonadati</taxon>
        <taxon>Bacteroidota</taxon>
        <taxon>Bacteroidia</taxon>
        <taxon>Bacteroidales</taxon>
        <taxon>Bacteroidaceae</taxon>
        <taxon>Phocaeicola</taxon>
    </lineage>
</organism>
<accession>A6KY05</accession>
<protein>
    <recommendedName>
        <fullName>Glycosyl hydrolase family 109 protein 2</fullName>
        <ecNumber>3.2.1.-</ecNumber>
    </recommendedName>
</protein>
<sequence length="413" mass="47369">MKRPNVLNLTCPAIPVVRIGFVGLGNRGILALERYMHLEGIEVKALCDLRKENIERAEHILREFGRPEAENYSEEGMWRKMCECKEIDLIYICTDWLTHTDIAVYALQQGRHVALEVPAAMSVADCWRLVDTAEETRRHCMMLENCCYDAFALTTLNMVQQGVLGEITHAEGAYIHDLRKHYFADEKAGGYHNHWIKLYSQQHTGNPYPTHGLGPVCQWMNIHRGDRMEYLVSMSSRQAGLSAYAGQVFGASSEEAAQSYEMGDVNTTLIHTAKGRTILLQYDVTTPRPYSRHQTVCGTKGFMQKYPVPCLLLDEYGKEPLSGEQFERMMEQYKHPFTAVIGEEARRKNMPNEMNYIMDYRLIHCLRNGLPLDQDVYDAAEWSCITELSERSVRQGSVPVEIPDFTRGNWKER</sequence>
<reference key="1">
    <citation type="journal article" date="2007" name="PLoS Biol.">
        <title>Evolution of symbiotic bacteria in the distal human intestine.</title>
        <authorList>
            <person name="Xu J."/>
            <person name="Mahowald M.A."/>
            <person name="Ley R.E."/>
            <person name="Lozupone C.A."/>
            <person name="Hamady M."/>
            <person name="Martens E.C."/>
            <person name="Henrissat B."/>
            <person name="Coutinho P.M."/>
            <person name="Minx P."/>
            <person name="Latreille P."/>
            <person name="Cordum H."/>
            <person name="Van Brunt A."/>
            <person name="Kim K."/>
            <person name="Fulton R.S."/>
            <person name="Fulton L.A."/>
            <person name="Clifton S.W."/>
            <person name="Wilson R.K."/>
            <person name="Knight R.D."/>
            <person name="Gordon J.I."/>
        </authorList>
    </citation>
    <scope>NUCLEOTIDE SEQUENCE [LARGE SCALE GENOMIC DNA]</scope>
    <source>
        <strain>ATCC 8482 / DSM 1447 / JCM 5826 / CCUG 4940 / NBRC 14291 / NCTC 11154</strain>
    </source>
</reference>
<keyword id="KW-0326">Glycosidase</keyword>
<keyword id="KW-0378">Hydrolase</keyword>
<keyword id="KW-0520">NAD</keyword>
<proteinExistence type="inferred from homology"/>
<dbReference type="EC" id="3.2.1.-"/>
<dbReference type="EMBL" id="CP000139">
    <property type="protein sequence ID" value="ABR38319.1"/>
    <property type="molecule type" value="Genomic_DNA"/>
</dbReference>
<dbReference type="RefSeq" id="WP_008667589.1">
    <property type="nucleotide sequence ID" value="NZ_CAXUBK010000001.1"/>
</dbReference>
<dbReference type="SMR" id="A6KY05"/>
<dbReference type="STRING" id="435590.BVU_0611"/>
<dbReference type="CAZy" id="GH109">
    <property type="family name" value="Glycoside Hydrolase Family 109"/>
</dbReference>
<dbReference type="PaxDb" id="435590-BVU_0611"/>
<dbReference type="GeneID" id="5301579"/>
<dbReference type="KEGG" id="bvu:BVU_0611"/>
<dbReference type="eggNOG" id="COG0673">
    <property type="taxonomic scope" value="Bacteria"/>
</dbReference>
<dbReference type="HOGENOM" id="CLU_046965_0_0_10"/>
<dbReference type="BioCyc" id="BVUL435590:G1G59-638-MONOMER"/>
<dbReference type="Proteomes" id="UP000002861">
    <property type="component" value="Chromosome"/>
</dbReference>
<dbReference type="GO" id="GO:0016798">
    <property type="term" value="F:hydrolase activity, acting on glycosyl bonds"/>
    <property type="evidence" value="ECO:0007669"/>
    <property type="project" value="UniProtKB-KW"/>
</dbReference>
<dbReference type="GO" id="GO:0000166">
    <property type="term" value="F:nucleotide binding"/>
    <property type="evidence" value="ECO:0007669"/>
    <property type="project" value="InterPro"/>
</dbReference>
<dbReference type="Gene3D" id="3.30.360.10">
    <property type="entry name" value="Dihydrodipicolinate Reductase, domain 2"/>
    <property type="match status" value="1"/>
</dbReference>
<dbReference type="Gene3D" id="3.40.50.720">
    <property type="entry name" value="NAD(P)-binding Rossmann-like Domain"/>
    <property type="match status" value="1"/>
</dbReference>
<dbReference type="InterPro" id="IPR000683">
    <property type="entry name" value="Gfo/Idh/MocA-like_OxRdtase_N"/>
</dbReference>
<dbReference type="InterPro" id="IPR050463">
    <property type="entry name" value="Gfo/Idh/MocA_oxidrdct_glycsds"/>
</dbReference>
<dbReference type="InterPro" id="IPR049303">
    <property type="entry name" value="Glyco_hydro_109_C"/>
</dbReference>
<dbReference type="InterPro" id="IPR036291">
    <property type="entry name" value="NAD(P)-bd_dom_sf"/>
</dbReference>
<dbReference type="PANTHER" id="PTHR43818">
    <property type="entry name" value="BCDNA.GH03377"/>
    <property type="match status" value="1"/>
</dbReference>
<dbReference type="PANTHER" id="PTHR43818:SF1">
    <property type="entry name" value="GLYCOSYL HYDROLASE FAMILY 109 PROTEIN"/>
    <property type="match status" value="1"/>
</dbReference>
<dbReference type="Pfam" id="PF01408">
    <property type="entry name" value="GFO_IDH_MocA"/>
    <property type="match status" value="1"/>
</dbReference>
<dbReference type="Pfam" id="PF21252">
    <property type="entry name" value="Glyco_hydro_109_C"/>
    <property type="match status" value="1"/>
</dbReference>
<dbReference type="SUPFAM" id="SSF55347">
    <property type="entry name" value="Glyceraldehyde-3-phosphate dehydrogenase-like, C-terminal domain"/>
    <property type="match status" value="1"/>
</dbReference>
<dbReference type="SUPFAM" id="SSF51735">
    <property type="entry name" value="NAD(P)-binding Rossmann-fold domains"/>
    <property type="match status" value="1"/>
</dbReference>
<comment type="function">
    <text evidence="1">Glycosidase.</text>
</comment>
<comment type="cofactor">
    <cofactor evidence="1">
        <name>NAD(+)</name>
        <dbReference type="ChEBI" id="CHEBI:57540"/>
    </cofactor>
    <text evidence="1">Binds 1 NAD(+) per subunit. The NAD(+) cannot dissociate.</text>
</comment>
<comment type="similarity">
    <text evidence="2">Belongs to the Gfo/Idh/MocA family. Glycosyl hydrolase 109 subfamily.</text>
</comment>
<evidence type="ECO:0000250" key="1"/>
<evidence type="ECO:0000305" key="2"/>
<gene>
    <name type="ordered locus">BVU_0611</name>
</gene>
<name>G1092_PHOV8</name>